<protein>
    <recommendedName>
        <fullName evidence="1">D-serine dehydratase 2</fullName>
        <ecNumber evidence="1">4.3.1.18</ecNumber>
    </recommendedName>
    <alternativeName>
        <fullName evidence="1">D-serine deaminase 2</fullName>
        <shortName evidence="1">DSD 2</shortName>
    </alternativeName>
</protein>
<accession>Q1R2Q6</accession>
<proteinExistence type="inferred from homology"/>
<reference key="1">
    <citation type="journal article" date="2006" name="Proc. Natl. Acad. Sci. U.S.A.">
        <title>Identification of genes subject to positive selection in uropathogenic strains of Escherichia coli: a comparative genomics approach.</title>
        <authorList>
            <person name="Chen S.L."/>
            <person name="Hung C.-S."/>
            <person name="Xu J."/>
            <person name="Reigstad C.S."/>
            <person name="Magrini V."/>
            <person name="Sabo A."/>
            <person name="Blasiar D."/>
            <person name="Bieri T."/>
            <person name="Meyer R.R."/>
            <person name="Ozersky P."/>
            <person name="Armstrong J.R."/>
            <person name="Fulton R.S."/>
            <person name="Latreille J.P."/>
            <person name="Spieth J."/>
            <person name="Hooton T.M."/>
            <person name="Mardis E.R."/>
            <person name="Hultgren S.J."/>
            <person name="Gordon J.I."/>
        </authorList>
    </citation>
    <scope>NUCLEOTIDE SEQUENCE [LARGE SCALE GENOMIC DNA]</scope>
    <source>
        <strain>UTI89 / UPEC</strain>
    </source>
</reference>
<organism>
    <name type="scientific">Escherichia coli (strain UTI89 / UPEC)</name>
    <dbReference type="NCBI Taxonomy" id="364106"/>
    <lineage>
        <taxon>Bacteria</taxon>
        <taxon>Pseudomonadati</taxon>
        <taxon>Pseudomonadota</taxon>
        <taxon>Gammaproteobacteria</taxon>
        <taxon>Enterobacterales</taxon>
        <taxon>Enterobacteriaceae</taxon>
        <taxon>Escherichia</taxon>
    </lineage>
</organism>
<comment type="catalytic activity">
    <reaction evidence="1">
        <text>D-serine = pyruvate + NH4(+)</text>
        <dbReference type="Rhea" id="RHEA:13977"/>
        <dbReference type="ChEBI" id="CHEBI:15361"/>
        <dbReference type="ChEBI" id="CHEBI:28938"/>
        <dbReference type="ChEBI" id="CHEBI:35247"/>
        <dbReference type="EC" id="4.3.1.18"/>
    </reaction>
</comment>
<comment type="cofactor">
    <cofactor evidence="1">
        <name>pyridoxal 5'-phosphate</name>
        <dbReference type="ChEBI" id="CHEBI:597326"/>
    </cofactor>
</comment>
<comment type="subunit">
    <text evidence="1">Monomer.</text>
</comment>
<comment type="similarity">
    <text evidence="1">Belongs to the serine/threonine dehydratase family. DsdA subfamily.</text>
</comment>
<gene>
    <name evidence="1" type="primary">dsdA2</name>
    <name type="ordered locus">UTI89_C4955</name>
</gene>
<dbReference type="EC" id="4.3.1.18" evidence="1"/>
<dbReference type="EMBL" id="CP000243">
    <property type="protein sequence ID" value="ABE10358.1"/>
    <property type="molecule type" value="Genomic_DNA"/>
</dbReference>
<dbReference type="SMR" id="Q1R2Q6"/>
<dbReference type="KEGG" id="eci:UTI89_C4955"/>
<dbReference type="HOGENOM" id="CLU_035707_0_0_6"/>
<dbReference type="Proteomes" id="UP000001952">
    <property type="component" value="Chromosome"/>
</dbReference>
<dbReference type="GO" id="GO:0008721">
    <property type="term" value="F:D-serine ammonia-lyase activity"/>
    <property type="evidence" value="ECO:0007669"/>
    <property type="project" value="UniProtKB-EC"/>
</dbReference>
<dbReference type="GO" id="GO:0016836">
    <property type="term" value="F:hydro-lyase activity"/>
    <property type="evidence" value="ECO:0007669"/>
    <property type="project" value="UniProtKB-UniRule"/>
</dbReference>
<dbReference type="GO" id="GO:0030170">
    <property type="term" value="F:pyridoxal phosphate binding"/>
    <property type="evidence" value="ECO:0007669"/>
    <property type="project" value="InterPro"/>
</dbReference>
<dbReference type="GO" id="GO:0036088">
    <property type="term" value="P:D-serine catabolic process"/>
    <property type="evidence" value="ECO:0007669"/>
    <property type="project" value="TreeGrafter"/>
</dbReference>
<dbReference type="GO" id="GO:0009097">
    <property type="term" value="P:isoleucine biosynthetic process"/>
    <property type="evidence" value="ECO:0007669"/>
    <property type="project" value="TreeGrafter"/>
</dbReference>
<dbReference type="CDD" id="cd06447">
    <property type="entry name" value="D-Ser-dehyd"/>
    <property type="match status" value="1"/>
</dbReference>
<dbReference type="FunFam" id="3.40.50.1100:FF:000018">
    <property type="entry name" value="D-serine dehydratase"/>
    <property type="match status" value="1"/>
</dbReference>
<dbReference type="Gene3D" id="3.40.50.1100">
    <property type="match status" value="2"/>
</dbReference>
<dbReference type="HAMAP" id="MF_01030">
    <property type="entry name" value="D_Ser_dehydrat"/>
    <property type="match status" value="1"/>
</dbReference>
<dbReference type="InterPro" id="IPR011780">
    <property type="entry name" value="D_Ser_am_lyase"/>
</dbReference>
<dbReference type="InterPro" id="IPR050147">
    <property type="entry name" value="Ser/Thr_Dehydratase"/>
</dbReference>
<dbReference type="InterPro" id="IPR000634">
    <property type="entry name" value="Ser/Thr_deHydtase_PyrdxlP-BS"/>
</dbReference>
<dbReference type="InterPro" id="IPR001926">
    <property type="entry name" value="TrpB-like_PALP"/>
</dbReference>
<dbReference type="InterPro" id="IPR036052">
    <property type="entry name" value="TrpB-like_PALP_sf"/>
</dbReference>
<dbReference type="NCBIfam" id="TIGR02035">
    <property type="entry name" value="D_Ser_am_lyase"/>
    <property type="match status" value="1"/>
</dbReference>
<dbReference type="NCBIfam" id="NF002823">
    <property type="entry name" value="PRK02991.1"/>
    <property type="match status" value="1"/>
</dbReference>
<dbReference type="PANTHER" id="PTHR48078:SF9">
    <property type="entry name" value="D-SERINE DEHYDRATASE"/>
    <property type="match status" value="1"/>
</dbReference>
<dbReference type="PANTHER" id="PTHR48078">
    <property type="entry name" value="THREONINE DEHYDRATASE, MITOCHONDRIAL-RELATED"/>
    <property type="match status" value="1"/>
</dbReference>
<dbReference type="Pfam" id="PF00291">
    <property type="entry name" value="PALP"/>
    <property type="match status" value="1"/>
</dbReference>
<dbReference type="SUPFAM" id="SSF53686">
    <property type="entry name" value="Tryptophan synthase beta subunit-like PLP-dependent enzymes"/>
    <property type="match status" value="1"/>
</dbReference>
<dbReference type="PROSITE" id="PS00165">
    <property type="entry name" value="DEHYDRATASE_SER_THR"/>
    <property type="match status" value="1"/>
</dbReference>
<name>SDHD2_ECOUT</name>
<keyword id="KW-0456">Lyase</keyword>
<keyword id="KW-0663">Pyridoxal phosphate</keyword>
<sequence>MENAKMNSLIAQYPLVKDLVALKETTWFNPGTTSLAEGLPYVGLTEQDVQDAHARLSRFAPYLAKAFPETAATGGIIESELVAIPAMQKRLEKEYQQPISGQLLLKKDSHLPISGSIKARGGIYEVLAHAEKLALEAGLLTLEDDYSKLLSPEFKQFFSQYSIAVGSTGNLGLSIGIMSARIGFKVTVHMSADARAWKKAKLRSHGVTVVEYEQDYGVAVEEGRKAAQSDPNCFFIDDENSRTLFLGYSVAGQRLKAQFAQQGRIVDADNPLFVYLPCGVGGGPGGVAFGLKLAFGDHVHCFFAEPTHSPCMLLGVHTGLHDQISVQDIGIDNLTAADGLAVGRASGFVGRAMERLLDGFYTLSDQTMYDMLGWLAQEEGIRLEPSALAGMAGPQRVCASVSYQQMHGFSAEQLRNATHLVWATGGGMVPEEEMEQYLAKGH</sequence>
<evidence type="ECO:0000255" key="1">
    <source>
        <dbReference type="HAMAP-Rule" id="MF_01030"/>
    </source>
</evidence>
<feature type="chain" id="PRO_0000291727" description="D-serine dehydratase 2">
    <location>
        <begin position="1"/>
        <end position="442"/>
    </location>
</feature>
<feature type="modified residue" description="N6-(pyridoxal phosphate)lysine" evidence="1">
    <location>
        <position position="118"/>
    </location>
</feature>